<gene>
    <name evidence="6" type="primary">Acp4</name>
    <name evidence="6" type="synonym">Acpt</name>
</gene>
<dbReference type="EC" id="3.1.3.2"/>
<dbReference type="EMBL" id="AC152939">
    <property type="status" value="NOT_ANNOTATED_CDS"/>
    <property type="molecule type" value="Genomic_DNA"/>
</dbReference>
<dbReference type="CCDS" id="CCDS57546.1"/>
<dbReference type="RefSeq" id="NP_001181963.1">
    <property type="nucleotide sequence ID" value="NM_001195034.1"/>
</dbReference>
<dbReference type="SMR" id="D3YTS9"/>
<dbReference type="FunCoup" id="D3YTS9">
    <property type="interactions" value="3"/>
</dbReference>
<dbReference type="STRING" id="10090.ENSMUSP00000112922"/>
<dbReference type="iPTMnet" id="D3YTS9"/>
<dbReference type="PhosphoSitePlus" id="D3YTS9"/>
<dbReference type="PaxDb" id="10090-ENSMUSP00000103578"/>
<dbReference type="Antibodypedia" id="32366">
    <property type="antibodies" value="77 antibodies from 20 providers"/>
</dbReference>
<dbReference type="Ensembl" id="ENSMUST00000118216.8">
    <property type="protein sequence ID" value="ENSMUSP00000112922.3"/>
    <property type="gene ID" value="ENSMUSG00000012777.15"/>
</dbReference>
<dbReference type="GeneID" id="100503991"/>
<dbReference type="AGR" id="MGI:3644563"/>
<dbReference type="CTD" id="93650"/>
<dbReference type="MGI" id="MGI:3644563">
    <property type="gene designation" value="Acp4"/>
</dbReference>
<dbReference type="VEuPathDB" id="HostDB:ENSMUSG00000012777"/>
<dbReference type="eggNOG" id="KOG3720">
    <property type="taxonomic scope" value="Eukaryota"/>
</dbReference>
<dbReference type="GeneTree" id="ENSGT00940000161433"/>
<dbReference type="HOGENOM" id="CLU_030431_1_1_1"/>
<dbReference type="InParanoid" id="D3YTS9"/>
<dbReference type="OMA" id="VPCHGSR"/>
<dbReference type="BioGRID-ORCS" id="100503991">
    <property type="hits" value="5 hits in 76 CRISPR screens"/>
</dbReference>
<dbReference type="PRO" id="PR:D3YTS9"/>
<dbReference type="Proteomes" id="UP000000589">
    <property type="component" value="Chromosome 7"/>
</dbReference>
<dbReference type="RNAct" id="D3YTS9">
    <property type="molecule type" value="protein"/>
</dbReference>
<dbReference type="Bgee" id="ENSMUSG00000012777">
    <property type="expression patterns" value="Expressed in testis and 26 other cell types or tissues"/>
</dbReference>
<dbReference type="ExpressionAtlas" id="D3YTS9">
    <property type="expression patterns" value="baseline and differential"/>
</dbReference>
<dbReference type="GO" id="GO:0016020">
    <property type="term" value="C:membrane"/>
    <property type="evidence" value="ECO:0007669"/>
    <property type="project" value="UniProtKB-SubCell"/>
</dbReference>
<dbReference type="GO" id="GO:0003993">
    <property type="term" value="F:acid phosphatase activity"/>
    <property type="evidence" value="ECO:0007669"/>
    <property type="project" value="UniProtKB-EC"/>
</dbReference>
<dbReference type="GO" id="GO:0004725">
    <property type="term" value="F:protein tyrosine phosphatase activity"/>
    <property type="evidence" value="ECO:0000250"/>
    <property type="project" value="UniProtKB"/>
</dbReference>
<dbReference type="GO" id="GO:0030971">
    <property type="term" value="F:receptor tyrosine kinase binding"/>
    <property type="evidence" value="ECO:0000250"/>
    <property type="project" value="UniProtKB"/>
</dbReference>
<dbReference type="GO" id="GO:0120154">
    <property type="term" value="P:negative regulation of ERBB4 signaling pathway"/>
    <property type="evidence" value="ECO:0000250"/>
    <property type="project" value="UniProtKB"/>
</dbReference>
<dbReference type="GO" id="GO:0010977">
    <property type="term" value="P:negative regulation of neuron projection development"/>
    <property type="evidence" value="ECO:0000250"/>
    <property type="project" value="UniProtKB"/>
</dbReference>
<dbReference type="GO" id="GO:0010955">
    <property type="term" value="P:negative regulation of protein processing"/>
    <property type="evidence" value="ECO:0000250"/>
    <property type="project" value="UniProtKB"/>
</dbReference>
<dbReference type="GO" id="GO:0042476">
    <property type="term" value="P:odontogenesis"/>
    <property type="evidence" value="ECO:0000250"/>
    <property type="project" value="UniProtKB"/>
</dbReference>
<dbReference type="GO" id="GO:1990264">
    <property type="term" value="P:peptidyl-tyrosine dephosphorylation involved in inactivation of protein kinase activity"/>
    <property type="evidence" value="ECO:0000250"/>
    <property type="project" value="UniProtKB"/>
</dbReference>
<dbReference type="GO" id="GO:0048168">
    <property type="term" value="P:regulation of neuronal synaptic plasticity"/>
    <property type="evidence" value="ECO:0000250"/>
    <property type="project" value="UniProtKB"/>
</dbReference>
<dbReference type="CDD" id="cd07061">
    <property type="entry name" value="HP_HAP_like"/>
    <property type="match status" value="1"/>
</dbReference>
<dbReference type="FunFam" id="3.40.50.1240:FF:000010">
    <property type="entry name" value="Prostatic acid phosphatase"/>
    <property type="match status" value="1"/>
</dbReference>
<dbReference type="Gene3D" id="3.40.50.1240">
    <property type="entry name" value="Phosphoglycerate mutase-like"/>
    <property type="match status" value="1"/>
</dbReference>
<dbReference type="InterPro" id="IPR033379">
    <property type="entry name" value="Acid_Pase_AS"/>
</dbReference>
<dbReference type="InterPro" id="IPR000560">
    <property type="entry name" value="His_Pase_clade-2"/>
</dbReference>
<dbReference type="InterPro" id="IPR029033">
    <property type="entry name" value="His_PPase_superfam"/>
</dbReference>
<dbReference type="InterPro" id="IPR050645">
    <property type="entry name" value="Histidine_acid_phosphatase"/>
</dbReference>
<dbReference type="PANTHER" id="PTHR11567">
    <property type="entry name" value="ACID PHOSPHATASE-RELATED"/>
    <property type="match status" value="1"/>
</dbReference>
<dbReference type="PANTHER" id="PTHR11567:SF145">
    <property type="entry name" value="TESTICULAR ACID PHOSPHATASE"/>
    <property type="match status" value="1"/>
</dbReference>
<dbReference type="Pfam" id="PF00328">
    <property type="entry name" value="His_Phos_2"/>
    <property type="match status" value="1"/>
</dbReference>
<dbReference type="SUPFAM" id="SSF53254">
    <property type="entry name" value="Phosphoglycerate mutase-like"/>
    <property type="match status" value="1"/>
</dbReference>
<dbReference type="PROSITE" id="PS00616">
    <property type="entry name" value="HIS_ACID_PHOSPHAT_1"/>
    <property type="match status" value="1"/>
</dbReference>
<dbReference type="PROSITE" id="PS00778">
    <property type="entry name" value="HIS_ACID_PHOSPHAT_2"/>
    <property type="match status" value="1"/>
</dbReference>
<name>PPAT_MOUSE</name>
<keyword id="KW-1015">Disulfide bond</keyword>
<keyword id="KW-0325">Glycoprotein</keyword>
<keyword id="KW-0378">Hydrolase</keyword>
<keyword id="KW-0472">Membrane</keyword>
<keyword id="KW-1185">Reference proteome</keyword>
<keyword id="KW-0732">Signal</keyword>
<keyword id="KW-0812">Transmembrane</keyword>
<keyword id="KW-1133">Transmembrane helix</keyword>
<sequence length="425" mass="46405">MAEPGSQGHTVGPLLLLLLLLLPRALPEGPLLFVALVFRHGDRAPLASYPTDPHKEAASTLWPRGLGQLTKEGIRQQLELGRFLRRRYKAFLSPEYKREEVYIRSTDFDRTLESAQANLAGLFPEAAPGSPETDWKPIPVHTVPVSEDKLLRFPMRSCPRYHELLRESTEAADYQEALEGWTDFLTRLGNFTGLSLVGEPLRRAWKVLDTLICQRAHGLDLPSWASPDVLRTLSQISALDIRAHVGPPRAAEKAQLTGGILLDAILSNFSRTQRLGLPLKMVMYSAHDSTLLALQGALGLYDGNTPPYAACMAFEFRGSSREPEEEDGENVTVSLIYRNDTSRPPLPLRVPGCPAPCPLGRFQQLTAPARPPAHGAPCHGSYEPASPPATVPLLAGAVAVLAVLSLGLGLLAWRPRCLRALGGTV</sequence>
<accession>D3YTS9</accession>
<reference key="1">
    <citation type="journal article" date="2009" name="PLoS Biol.">
        <title>Lineage-specific biology revealed by a finished genome assembly of the mouse.</title>
        <authorList>
            <person name="Church D.M."/>
            <person name="Goodstadt L."/>
            <person name="Hillier L.W."/>
            <person name="Zody M.C."/>
            <person name="Goldstein S."/>
            <person name="She X."/>
            <person name="Bult C.J."/>
            <person name="Agarwala R."/>
            <person name="Cherry J.L."/>
            <person name="DiCuccio M."/>
            <person name="Hlavina W."/>
            <person name="Kapustin Y."/>
            <person name="Meric P."/>
            <person name="Maglott D."/>
            <person name="Birtle Z."/>
            <person name="Marques A.C."/>
            <person name="Graves T."/>
            <person name="Zhou S."/>
            <person name="Teague B."/>
            <person name="Potamousis K."/>
            <person name="Churas C."/>
            <person name="Place M."/>
            <person name="Herschleb J."/>
            <person name="Runnheim R."/>
            <person name="Forrest D."/>
            <person name="Amos-Landgraf J."/>
            <person name="Schwartz D.C."/>
            <person name="Cheng Z."/>
            <person name="Lindblad-Toh K."/>
            <person name="Eichler E.E."/>
            <person name="Ponting C.P."/>
        </authorList>
    </citation>
    <scope>NUCLEOTIDE SEQUENCE [LARGE SCALE GENOMIC DNA]</scope>
    <source>
        <strain>C57BL/6J</strain>
    </source>
</reference>
<reference key="2">
    <citation type="journal article" date="2016" name="Am. J. Hum. Genet.">
        <title>Recessive mutations in ACPT, encoding testicular acid phosphatase, cause hypoplastic amelogenesis imperfecta.</title>
        <authorList>
            <person name="Seymen F."/>
            <person name="Kim Y.J."/>
            <person name="Lee Y.J."/>
            <person name="Kang J."/>
            <person name="Kim T.H."/>
            <person name="Choi H."/>
            <person name="Koruyucu M."/>
            <person name="Kasimoglu Y."/>
            <person name="Tuna E.B."/>
            <person name="Gencay K."/>
            <person name="Shin T.J."/>
            <person name="Hyun H.K."/>
            <person name="Kim Y.J."/>
            <person name="Lee S.H."/>
            <person name="Lee Z.H."/>
            <person name="Zhang H."/>
            <person name="Hu J.C."/>
            <person name="Simmer J.P."/>
            <person name="Cho E.S."/>
            <person name="Kim J.W."/>
        </authorList>
    </citation>
    <scope>DEVELOPMENTAL STAGE</scope>
</reference>
<proteinExistence type="evidence at protein level"/>
<feature type="signal peptide" evidence="3">
    <location>
        <begin position="1"/>
        <end position="27"/>
    </location>
</feature>
<feature type="chain" id="PRO_5006722351" description="Testicular acid phosphatase">
    <location>
        <begin position="28"/>
        <end position="425"/>
    </location>
</feature>
<feature type="topological domain" description="Extracellular" evidence="5">
    <location>
        <begin position="28"/>
        <end position="392"/>
    </location>
</feature>
<feature type="transmembrane region" description="Helical" evidence="3">
    <location>
        <begin position="393"/>
        <end position="413"/>
    </location>
</feature>
<feature type="topological domain" description="Cytoplasmic" evidence="5">
    <location>
        <begin position="414"/>
        <end position="425"/>
    </location>
</feature>
<feature type="active site" description="Nucleophile" evidence="1">
    <location>
        <position position="40"/>
    </location>
</feature>
<feature type="active site" description="Proton donor" evidence="1">
    <location>
        <position position="288"/>
    </location>
</feature>
<feature type="disulfide bond" evidence="1">
    <location>
        <begin position="158"/>
        <end position="378"/>
    </location>
</feature>
<feature type="disulfide bond" evidence="1">
    <location>
        <begin position="213"/>
        <end position="311"/>
    </location>
</feature>
<feature type="disulfide bond" evidence="1">
    <location>
        <begin position="353"/>
        <end position="357"/>
    </location>
</feature>
<comment type="function">
    <text evidence="2">May dephosphorylate receptor tyrosine-protein kinase ERBB4 and inhibits its ligand-induced proteolytic cleavage. May play a role in odontogenesis.</text>
</comment>
<comment type="catalytic activity">
    <reaction>
        <text>a phosphate monoester + H2O = an alcohol + phosphate</text>
        <dbReference type="Rhea" id="RHEA:15017"/>
        <dbReference type="ChEBI" id="CHEBI:15377"/>
        <dbReference type="ChEBI" id="CHEBI:30879"/>
        <dbReference type="ChEBI" id="CHEBI:43474"/>
        <dbReference type="ChEBI" id="CHEBI:67140"/>
        <dbReference type="EC" id="3.1.3.2"/>
    </reaction>
</comment>
<comment type="subunit">
    <text evidence="2">Homodimer.</text>
</comment>
<comment type="subcellular location">
    <subcellularLocation>
        <location evidence="3">Membrane</location>
        <topology evidence="3">Single-pass membrane protein</topology>
    </subcellularLocation>
</comment>
<comment type="developmental stage">
    <text evidence="4">In the developing tooth from 8-day-old mice it is expressed in secretory-stage ameloblasts, follicular cells, odontoblasts, and osteoblasts (at protein level).</text>
</comment>
<comment type="PTM">
    <text evidence="2">Glycosylated.</text>
</comment>
<comment type="similarity">
    <text evidence="5">Belongs to the histidine acid phosphatase family.</text>
</comment>
<protein>
    <recommendedName>
        <fullName evidence="5">Testicular acid phosphatase</fullName>
        <ecNumber>3.1.3.2</ecNumber>
    </recommendedName>
    <alternativeName>
        <fullName evidence="6">Acid phosphatase 4</fullName>
    </alternativeName>
</protein>
<organism>
    <name type="scientific">Mus musculus</name>
    <name type="common">Mouse</name>
    <dbReference type="NCBI Taxonomy" id="10090"/>
    <lineage>
        <taxon>Eukaryota</taxon>
        <taxon>Metazoa</taxon>
        <taxon>Chordata</taxon>
        <taxon>Craniata</taxon>
        <taxon>Vertebrata</taxon>
        <taxon>Euteleostomi</taxon>
        <taxon>Mammalia</taxon>
        <taxon>Eutheria</taxon>
        <taxon>Euarchontoglires</taxon>
        <taxon>Glires</taxon>
        <taxon>Rodentia</taxon>
        <taxon>Myomorpha</taxon>
        <taxon>Muroidea</taxon>
        <taxon>Muridae</taxon>
        <taxon>Murinae</taxon>
        <taxon>Mus</taxon>
        <taxon>Mus</taxon>
    </lineage>
</organism>
<evidence type="ECO:0000250" key="1">
    <source>
        <dbReference type="UniProtKB" id="P15309"/>
    </source>
</evidence>
<evidence type="ECO:0000250" key="2">
    <source>
        <dbReference type="UniProtKB" id="Q9BZG2"/>
    </source>
</evidence>
<evidence type="ECO:0000255" key="3"/>
<evidence type="ECO:0000269" key="4">
    <source>
    </source>
</evidence>
<evidence type="ECO:0000305" key="5"/>
<evidence type="ECO:0000312" key="6">
    <source>
        <dbReference type="MGI" id="MGI:3644563"/>
    </source>
</evidence>